<comment type="function">
    <text evidence="1">One of the primary rRNA binding proteins, it binds directly to 16S rRNA central domain where it helps coordinate assembly of the platform of the 30S subunit.</text>
</comment>
<comment type="subunit">
    <text evidence="1">Part of the 30S ribosomal subunit. Contacts proteins S5 and S12.</text>
</comment>
<comment type="similarity">
    <text evidence="1">Belongs to the universal ribosomal protein uS8 family.</text>
</comment>
<reference key="1">
    <citation type="journal article" date="2007" name="PLoS Biol.">
        <title>Evolution of symbiotic bacteria in the distal human intestine.</title>
        <authorList>
            <person name="Xu J."/>
            <person name="Mahowald M.A."/>
            <person name="Ley R.E."/>
            <person name="Lozupone C.A."/>
            <person name="Hamady M."/>
            <person name="Martens E.C."/>
            <person name="Henrissat B."/>
            <person name="Coutinho P.M."/>
            <person name="Minx P."/>
            <person name="Latreille P."/>
            <person name="Cordum H."/>
            <person name="Van Brunt A."/>
            <person name="Kim K."/>
            <person name="Fulton R.S."/>
            <person name="Fulton L.A."/>
            <person name="Clifton S.W."/>
            <person name="Wilson R.K."/>
            <person name="Knight R.D."/>
            <person name="Gordon J.I."/>
        </authorList>
    </citation>
    <scope>NUCLEOTIDE SEQUENCE [LARGE SCALE GENOMIC DNA]</scope>
    <source>
        <strain>ATCC 8503 / DSM 20701 / CIP 104284 / JCM 5825 / NCTC 11152</strain>
    </source>
</reference>
<accession>A6LEH7</accession>
<keyword id="KW-1185">Reference proteome</keyword>
<keyword id="KW-0687">Ribonucleoprotein</keyword>
<keyword id="KW-0689">Ribosomal protein</keyword>
<keyword id="KW-0694">RNA-binding</keyword>
<keyword id="KW-0699">rRNA-binding</keyword>
<feature type="chain" id="PRO_0000305754" description="Small ribosomal subunit protein uS8">
    <location>
        <begin position="1"/>
        <end position="131"/>
    </location>
</feature>
<evidence type="ECO:0000255" key="1">
    <source>
        <dbReference type="HAMAP-Rule" id="MF_01302"/>
    </source>
</evidence>
<evidence type="ECO:0000305" key="2"/>
<dbReference type="EMBL" id="CP000140">
    <property type="protein sequence ID" value="ABR44091.1"/>
    <property type="molecule type" value="Genomic_DNA"/>
</dbReference>
<dbReference type="RefSeq" id="WP_005634758.1">
    <property type="nucleotide sequence ID" value="NZ_LR215978.1"/>
</dbReference>
<dbReference type="SMR" id="A6LEH7"/>
<dbReference type="STRING" id="435591.BDI_2366"/>
<dbReference type="PaxDb" id="435591-BDI_2366"/>
<dbReference type="GeneID" id="93522359"/>
<dbReference type="KEGG" id="pdi:BDI_2366"/>
<dbReference type="eggNOG" id="COG0096">
    <property type="taxonomic scope" value="Bacteria"/>
</dbReference>
<dbReference type="HOGENOM" id="CLU_098428_0_2_10"/>
<dbReference type="BioCyc" id="PDIS435591:G1G5A-2431-MONOMER"/>
<dbReference type="Proteomes" id="UP000000566">
    <property type="component" value="Chromosome"/>
</dbReference>
<dbReference type="GO" id="GO:1990904">
    <property type="term" value="C:ribonucleoprotein complex"/>
    <property type="evidence" value="ECO:0007669"/>
    <property type="project" value="UniProtKB-KW"/>
</dbReference>
<dbReference type="GO" id="GO:0005840">
    <property type="term" value="C:ribosome"/>
    <property type="evidence" value="ECO:0007669"/>
    <property type="project" value="UniProtKB-KW"/>
</dbReference>
<dbReference type="GO" id="GO:0019843">
    <property type="term" value="F:rRNA binding"/>
    <property type="evidence" value="ECO:0007669"/>
    <property type="project" value="UniProtKB-UniRule"/>
</dbReference>
<dbReference type="GO" id="GO:0003735">
    <property type="term" value="F:structural constituent of ribosome"/>
    <property type="evidence" value="ECO:0007669"/>
    <property type="project" value="InterPro"/>
</dbReference>
<dbReference type="GO" id="GO:0006412">
    <property type="term" value="P:translation"/>
    <property type="evidence" value="ECO:0007669"/>
    <property type="project" value="UniProtKB-UniRule"/>
</dbReference>
<dbReference type="FunFam" id="3.30.1370.30:FF:000005">
    <property type="entry name" value="30S ribosomal protein S8"/>
    <property type="match status" value="1"/>
</dbReference>
<dbReference type="FunFam" id="3.30.1490.10:FF:000001">
    <property type="entry name" value="30S ribosomal protein S8"/>
    <property type="match status" value="1"/>
</dbReference>
<dbReference type="Gene3D" id="3.30.1370.30">
    <property type="match status" value="1"/>
</dbReference>
<dbReference type="Gene3D" id="3.30.1490.10">
    <property type="match status" value="1"/>
</dbReference>
<dbReference type="HAMAP" id="MF_01302_B">
    <property type="entry name" value="Ribosomal_uS8_B"/>
    <property type="match status" value="1"/>
</dbReference>
<dbReference type="InterPro" id="IPR000630">
    <property type="entry name" value="Ribosomal_uS8"/>
</dbReference>
<dbReference type="InterPro" id="IPR047863">
    <property type="entry name" value="Ribosomal_uS8_CS"/>
</dbReference>
<dbReference type="InterPro" id="IPR035987">
    <property type="entry name" value="Ribosomal_uS8_sf"/>
</dbReference>
<dbReference type="NCBIfam" id="NF001109">
    <property type="entry name" value="PRK00136.1"/>
    <property type="match status" value="1"/>
</dbReference>
<dbReference type="PANTHER" id="PTHR11758">
    <property type="entry name" value="40S RIBOSOMAL PROTEIN S15A"/>
    <property type="match status" value="1"/>
</dbReference>
<dbReference type="Pfam" id="PF00410">
    <property type="entry name" value="Ribosomal_S8"/>
    <property type="match status" value="1"/>
</dbReference>
<dbReference type="SUPFAM" id="SSF56047">
    <property type="entry name" value="Ribosomal protein S8"/>
    <property type="match status" value="1"/>
</dbReference>
<dbReference type="PROSITE" id="PS00053">
    <property type="entry name" value="RIBOSOMAL_S8"/>
    <property type="match status" value="1"/>
</dbReference>
<gene>
    <name evidence="1" type="primary">rpsH</name>
    <name type="ordered locus">BDI_2366</name>
</gene>
<organism>
    <name type="scientific">Parabacteroides distasonis (strain ATCC 8503 / DSM 20701 / CIP 104284 / JCM 5825 / NCTC 11152)</name>
    <dbReference type="NCBI Taxonomy" id="435591"/>
    <lineage>
        <taxon>Bacteria</taxon>
        <taxon>Pseudomonadati</taxon>
        <taxon>Bacteroidota</taxon>
        <taxon>Bacteroidia</taxon>
        <taxon>Bacteroidales</taxon>
        <taxon>Tannerellaceae</taxon>
        <taxon>Parabacteroides</taxon>
    </lineage>
</organism>
<protein>
    <recommendedName>
        <fullName evidence="1">Small ribosomal subunit protein uS8</fullName>
    </recommendedName>
    <alternativeName>
        <fullName evidence="2">30S ribosomal protein S8</fullName>
    </alternativeName>
</protein>
<name>RS8_PARD8</name>
<proteinExistence type="inferred from homology"/>
<sequence length="131" mass="14717">MTDPIADYLTRLRNAIKAKHRVVEVPASNLKKEITKILFDKGYILNFKFVEDGPQGTIKIALKYDLVNKVNAIKKLERVSTPGLRKYTGYKEMPRVLNGLGIAVLSTSKGVMTDKEARDLKIGGEVLCYVY</sequence>